<accession>Q9UBC0</accession>
<accession>B2RTV4</accession>
<accession>Q99744</accession>
<accession>Q9UMR6</accession>
<evidence type="ECO:0000250" key="1"/>
<evidence type="ECO:0000255" key="2">
    <source>
        <dbReference type="PROSITE-ProRule" id="PRU00108"/>
    </source>
</evidence>
<evidence type="ECO:0000255" key="3">
    <source>
        <dbReference type="PROSITE-ProRule" id="PRU00374"/>
    </source>
</evidence>
<evidence type="ECO:0000256" key="4">
    <source>
        <dbReference type="SAM" id="MobiDB-lite"/>
    </source>
</evidence>
<evidence type="ECO:0000269" key="5">
    <source>
    </source>
</evidence>
<evidence type="ECO:0000305" key="6"/>
<proteinExistence type="evidence at protein level"/>
<feature type="chain" id="PRO_0000202402" description="Hepatocyte nuclear factor 6">
    <location>
        <begin position="1"/>
        <end position="465"/>
    </location>
</feature>
<feature type="DNA-binding region" description="CUT" evidence="3">
    <location>
        <begin position="283"/>
        <end position="369"/>
    </location>
</feature>
<feature type="DNA-binding region" description="Homeobox" evidence="2">
    <location>
        <begin position="385"/>
        <end position="444"/>
    </location>
</feature>
<feature type="region of interest" description="Disordered" evidence="4">
    <location>
        <begin position="17"/>
        <end position="55"/>
    </location>
</feature>
<feature type="region of interest" description="Disordered" evidence="4">
    <location>
        <begin position="120"/>
        <end position="141"/>
    </location>
</feature>
<feature type="region of interest" description="Disordered" evidence="4">
    <location>
        <begin position="264"/>
        <end position="290"/>
    </location>
</feature>
<feature type="region of interest" description="Disordered" evidence="4">
    <location>
        <begin position="442"/>
        <end position="465"/>
    </location>
</feature>
<feature type="compositionally biased region" description="Basic residues" evidence="4">
    <location>
        <begin position="123"/>
        <end position="140"/>
    </location>
</feature>
<feature type="compositionally biased region" description="Polar residues" evidence="4">
    <location>
        <begin position="273"/>
        <end position="288"/>
    </location>
</feature>
<feature type="compositionally biased region" description="Low complexity" evidence="4">
    <location>
        <begin position="448"/>
        <end position="465"/>
    </location>
</feature>
<feature type="sequence variant" id="VAR_010729" description="In dbSNP:rs74805019." evidence="5">
    <original>P</original>
    <variation>A</variation>
    <location>
        <position position="75"/>
    </location>
</feature>
<feature type="sequence conflict" description="In Ref. 5 and 6." evidence="6" ref="5 6">
    <original>A</original>
    <variation>T</variation>
    <location>
        <position position="220"/>
    </location>
</feature>
<feature type="sequence conflict" description="In Ref. 6; AAB61705." evidence="6" ref="6">
    <original>S</original>
    <variation>N</variation>
    <location>
        <position position="284"/>
    </location>
</feature>
<feature type="sequence conflict" description="In Ref. 6; AAB61705." evidence="6" ref="6">
    <original>Q</original>
    <variation>H</variation>
    <location>
        <position position="288"/>
    </location>
</feature>
<feature type="sequence conflict" description="In Ref. 6; AAB61705." evidence="6" ref="6">
    <original>R</original>
    <variation>K</variation>
    <location>
        <position position="318"/>
    </location>
</feature>
<feature type="sequence conflict" description="In Ref. 6; AAB61705." evidence="6" ref="6">
    <original>K</original>
    <variation>Q</variation>
    <location>
        <position position="386"/>
    </location>
</feature>
<sequence length="465" mass="51023">MNAQLTMEAIGELHGVSHEPVPAPADLLGGSPHARSSVAHRGSHLPPAHPRSMGMASLLDGGSGGGDYHHHHRAPEHSLAGPLHPTMTMACETPPGMSMPTTYTTLTPLQPLPPISTVSDKFPHHHHHHHHHHHPHHHQRLAGNVSGSFTLMRDERGLASMNNLYTPYHKDVAGMGQSLSPLSSSGLGSIHNSQQGLPHYAHPGAAMPTDKMLTPNGFEAHHPAMLGRHGEQHLTPTSAGMVPINGLPPHHPHAHLNAQGHGQLLGTAREPNPSVTGAQVSNGSNSGQMEEINTKEVAQRITTELKRYSIPQAIFAQRVLCRSQGTLSDLLRNPKPWSKLKSGRETFRRMWKWLQEPEFQRMSALRLAACKRKEQEHGKDRGNTPKKPRLVFTDVQRRTLHAIFKENKRPSKELQITISQQLGLELSTVSNFFMNARRRSLDKWQDEGSSNSGNSSSSSSTCTKA</sequence>
<name>HNF6_HUMAN</name>
<dbReference type="EMBL" id="AF035581">
    <property type="protein sequence ID" value="AAD02033.1"/>
    <property type="molecule type" value="Genomic_DNA"/>
</dbReference>
<dbReference type="EMBL" id="AF035580">
    <property type="protein sequence ID" value="AAD02033.1"/>
    <property type="status" value="JOINED"/>
    <property type="molecule type" value="Genomic_DNA"/>
</dbReference>
<dbReference type="EMBL" id="U96173">
    <property type="protein sequence ID" value="AAD00826.1"/>
    <property type="molecule type" value="mRNA"/>
</dbReference>
<dbReference type="EMBL" id="CH471082">
    <property type="protein sequence ID" value="EAW77461.1"/>
    <property type="molecule type" value="Genomic_DNA"/>
</dbReference>
<dbReference type="EMBL" id="BC140830">
    <property type="protein sequence ID" value="AAI40831.1"/>
    <property type="molecule type" value="mRNA"/>
</dbReference>
<dbReference type="EMBL" id="Y17739">
    <property type="protein sequence ID" value="CAB50769.1"/>
    <property type="molecule type" value="Genomic_DNA"/>
</dbReference>
<dbReference type="EMBL" id="U77975">
    <property type="protein sequence ID" value="AAB61705.1"/>
    <property type="molecule type" value="mRNA"/>
</dbReference>
<dbReference type="CCDS" id="CCDS10150.1"/>
<dbReference type="RefSeq" id="NP_004489.1">
    <property type="nucleotide sequence ID" value="NM_004498.4"/>
</dbReference>
<dbReference type="BMRB" id="Q9UBC0"/>
<dbReference type="SMR" id="Q9UBC0"/>
<dbReference type="BioGRID" id="109417">
    <property type="interactions" value="40"/>
</dbReference>
<dbReference type="CORUM" id="Q9UBC0"/>
<dbReference type="FunCoup" id="Q9UBC0">
    <property type="interactions" value="2494"/>
</dbReference>
<dbReference type="IntAct" id="Q9UBC0">
    <property type="interactions" value="2"/>
</dbReference>
<dbReference type="STRING" id="9606.ENSP00000302630"/>
<dbReference type="GlyGen" id="Q9UBC0">
    <property type="glycosylation" value="1 site, 1 O-linked glycan (1 site)"/>
</dbReference>
<dbReference type="iPTMnet" id="Q9UBC0"/>
<dbReference type="PhosphoSitePlus" id="Q9UBC0"/>
<dbReference type="BioMuta" id="ONECUT1"/>
<dbReference type="DMDM" id="13627184"/>
<dbReference type="jPOST" id="Q9UBC0"/>
<dbReference type="MassIVE" id="Q9UBC0"/>
<dbReference type="PaxDb" id="9606-ENSP00000302630"/>
<dbReference type="PeptideAtlas" id="Q9UBC0"/>
<dbReference type="ProteomicsDB" id="83930"/>
<dbReference type="Antibodypedia" id="930">
    <property type="antibodies" value="232 antibodies from 30 providers"/>
</dbReference>
<dbReference type="DNASU" id="3175"/>
<dbReference type="Ensembl" id="ENST00000305901.7">
    <property type="protein sequence ID" value="ENSP00000302630.4"/>
    <property type="gene ID" value="ENSG00000169856.9"/>
</dbReference>
<dbReference type="GeneID" id="3175"/>
<dbReference type="KEGG" id="hsa:3175"/>
<dbReference type="MANE-Select" id="ENST00000305901.7">
    <property type="protein sequence ID" value="ENSP00000302630.4"/>
    <property type="RefSeq nucleotide sequence ID" value="NM_004498.4"/>
    <property type="RefSeq protein sequence ID" value="NP_004489.1"/>
</dbReference>
<dbReference type="UCSC" id="uc002aci.3">
    <property type="organism name" value="human"/>
</dbReference>
<dbReference type="AGR" id="HGNC:8138"/>
<dbReference type="CTD" id="3175"/>
<dbReference type="DisGeNET" id="3175"/>
<dbReference type="GeneCards" id="ONECUT1"/>
<dbReference type="HGNC" id="HGNC:8138">
    <property type="gene designation" value="ONECUT1"/>
</dbReference>
<dbReference type="HPA" id="ENSG00000169856">
    <property type="expression patterns" value="Group enriched (gallbladder, liver, pancreas, retina)"/>
</dbReference>
<dbReference type="MalaCards" id="ONECUT1"/>
<dbReference type="MIM" id="604164">
    <property type="type" value="gene"/>
</dbReference>
<dbReference type="neXtProt" id="NX_Q9UBC0"/>
<dbReference type="OpenTargets" id="ENSG00000169856"/>
<dbReference type="PharmGKB" id="PA31924"/>
<dbReference type="VEuPathDB" id="HostDB:ENSG00000169856"/>
<dbReference type="eggNOG" id="KOG2252">
    <property type="taxonomic scope" value="Eukaryota"/>
</dbReference>
<dbReference type="GeneTree" id="ENSGT00950000183103"/>
<dbReference type="HOGENOM" id="CLU_018642_0_0_1"/>
<dbReference type="InParanoid" id="Q9UBC0"/>
<dbReference type="OMA" id="HRSNHLP"/>
<dbReference type="OrthoDB" id="10068888at2759"/>
<dbReference type="PAN-GO" id="Q9UBC0">
    <property type="GO annotations" value="4 GO annotations based on evolutionary models"/>
</dbReference>
<dbReference type="PhylomeDB" id="Q9UBC0"/>
<dbReference type="TreeFam" id="TF318206"/>
<dbReference type="PathwayCommons" id="Q9UBC0"/>
<dbReference type="Reactome" id="R-HSA-210744">
    <property type="pathway name" value="Regulation of gene expression in late stage (branching morphogenesis) pancreatic bud precursor cells"/>
</dbReference>
<dbReference type="Reactome" id="R-HSA-210747">
    <property type="pathway name" value="Regulation of gene expression in early pancreatic precursor cells"/>
</dbReference>
<dbReference type="Reactome" id="R-HSA-9925561">
    <property type="pathway name" value="Developmental Lineage of Pancreatic Acinar Cells"/>
</dbReference>
<dbReference type="SignaLink" id="Q9UBC0"/>
<dbReference type="BioGRID-ORCS" id="3175">
    <property type="hits" value="14 hits in 1171 CRISPR screens"/>
</dbReference>
<dbReference type="ChiTaRS" id="ONECUT1">
    <property type="organism name" value="human"/>
</dbReference>
<dbReference type="GenomeRNAi" id="3175"/>
<dbReference type="Pharos" id="Q9UBC0">
    <property type="development level" value="Tbio"/>
</dbReference>
<dbReference type="PRO" id="PR:Q9UBC0"/>
<dbReference type="Proteomes" id="UP000005640">
    <property type="component" value="Chromosome 15"/>
</dbReference>
<dbReference type="RNAct" id="Q9UBC0">
    <property type="molecule type" value="protein"/>
</dbReference>
<dbReference type="Bgee" id="ENSG00000169856">
    <property type="expression patterns" value="Expressed in body of pancreas and 45 other cell types or tissues"/>
</dbReference>
<dbReference type="ExpressionAtlas" id="Q9UBC0">
    <property type="expression patterns" value="baseline and differential"/>
</dbReference>
<dbReference type="GO" id="GO:0000785">
    <property type="term" value="C:chromatin"/>
    <property type="evidence" value="ECO:0000247"/>
    <property type="project" value="NTNU_SB"/>
</dbReference>
<dbReference type="GO" id="GO:0005654">
    <property type="term" value="C:nucleoplasm"/>
    <property type="evidence" value="ECO:0000314"/>
    <property type="project" value="HPA"/>
</dbReference>
<dbReference type="GO" id="GO:0005634">
    <property type="term" value="C:nucleus"/>
    <property type="evidence" value="ECO:0000318"/>
    <property type="project" value="GO_Central"/>
</dbReference>
<dbReference type="GO" id="GO:0003682">
    <property type="term" value="F:chromatin binding"/>
    <property type="evidence" value="ECO:0007669"/>
    <property type="project" value="Ensembl"/>
</dbReference>
<dbReference type="GO" id="GO:0001228">
    <property type="term" value="F:DNA-binding transcription activator activity, RNA polymerase II-specific"/>
    <property type="evidence" value="ECO:0000250"/>
    <property type="project" value="BHF-UCL"/>
</dbReference>
<dbReference type="GO" id="GO:0000981">
    <property type="term" value="F:DNA-binding transcription factor activity, RNA polymerase II-specific"/>
    <property type="evidence" value="ECO:0000247"/>
    <property type="project" value="NTNU_SB"/>
</dbReference>
<dbReference type="GO" id="GO:0000978">
    <property type="term" value="F:RNA polymerase II cis-regulatory region sequence-specific DNA binding"/>
    <property type="evidence" value="ECO:0000318"/>
    <property type="project" value="GO_Central"/>
</dbReference>
<dbReference type="GO" id="GO:1990837">
    <property type="term" value="F:sequence-specific double-stranded DNA binding"/>
    <property type="evidence" value="ECO:0000314"/>
    <property type="project" value="ARUK-UCL"/>
</dbReference>
<dbReference type="GO" id="GO:0009653">
    <property type="term" value="P:anatomical structure morphogenesis"/>
    <property type="evidence" value="ECO:0007669"/>
    <property type="project" value="Ensembl"/>
</dbReference>
<dbReference type="GO" id="GO:0030183">
    <property type="term" value="P:B cell differentiation"/>
    <property type="evidence" value="ECO:0007669"/>
    <property type="project" value="Ensembl"/>
</dbReference>
<dbReference type="GO" id="GO:0045165">
    <property type="term" value="P:cell fate commitment"/>
    <property type="evidence" value="ECO:0007669"/>
    <property type="project" value="Ensembl"/>
</dbReference>
<dbReference type="GO" id="GO:0016477">
    <property type="term" value="P:cell migration"/>
    <property type="evidence" value="ECO:0007669"/>
    <property type="project" value="Ensembl"/>
</dbReference>
<dbReference type="GO" id="GO:0060271">
    <property type="term" value="P:cilium assembly"/>
    <property type="evidence" value="ECO:0007669"/>
    <property type="project" value="Ensembl"/>
</dbReference>
<dbReference type="GO" id="GO:0007492">
    <property type="term" value="P:endoderm development"/>
    <property type="evidence" value="ECO:0007669"/>
    <property type="project" value="Ensembl"/>
</dbReference>
<dbReference type="GO" id="GO:0002064">
    <property type="term" value="P:epithelial cell development"/>
    <property type="evidence" value="ECO:0007669"/>
    <property type="project" value="Ensembl"/>
</dbReference>
<dbReference type="GO" id="GO:0006006">
    <property type="term" value="P:glucose metabolic process"/>
    <property type="evidence" value="ECO:0007669"/>
    <property type="project" value="Ensembl"/>
</dbReference>
<dbReference type="GO" id="GO:0001889">
    <property type="term" value="P:liver development"/>
    <property type="evidence" value="ECO:0007669"/>
    <property type="project" value="Ensembl"/>
</dbReference>
<dbReference type="GO" id="GO:0030512">
    <property type="term" value="P:negative regulation of transforming growth factor beta receptor signaling pathway"/>
    <property type="evidence" value="ECO:0007669"/>
    <property type="project" value="Ensembl"/>
</dbReference>
<dbReference type="GO" id="GO:0007219">
    <property type="term" value="P:Notch signaling pathway"/>
    <property type="evidence" value="ECO:0007669"/>
    <property type="project" value="Ensembl"/>
</dbReference>
<dbReference type="GO" id="GO:0003310">
    <property type="term" value="P:pancreatic A cell differentiation"/>
    <property type="evidence" value="ECO:0007669"/>
    <property type="project" value="Ensembl"/>
</dbReference>
<dbReference type="GO" id="GO:0003311">
    <property type="term" value="P:pancreatic D cell differentiation"/>
    <property type="evidence" value="ECO:0007669"/>
    <property type="project" value="Ensembl"/>
</dbReference>
<dbReference type="GO" id="GO:0030335">
    <property type="term" value="P:positive regulation of cell migration"/>
    <property type="evidence" value="ECO:0007669"/>
    <property type="project" value="Ensembl"/>
</dbReference>
<dbReference type="GO" id="GO:0045944">
    <property type="term" value="P:positive regulation of transcription by RNA polymerase II"/>
    <property type="evidence" value="ECO:0000250"/>
    <property type="project" value="BHF-UCL"/>
</dbReference>
<dbReference type="GO" id="GO:0001952">
    <property type="term" value="P:regulation of cell-matrix adhesion"/>
    <property type="evidence" value="ECO:0007669"/>
    <property type="project" value="Ensembl"/>
</dbReference>
<dbReference type="GO" id="GO:0006355">
    <property type="term" value="P:regulation of DNA-templated transcription"/>
    <property type="evidence" value="ECO:0000303"/>
    <property type="project" value="UniProtKB"/>
</dbReference>
<dbReference type="GO" id="GO:0006357">
    <property type="term" value="P:regulation of transcription by RNA polymerase II"/>
    <property type="evidence" value="ECO:0000318"/>
    <property type="project" value="GO_Central"/>
</dbReference>
<dbReference type="GO" id="GO:0048536">
    <property type="term" value="P:spleen development"/>
    <property type="evidence" value="ECO:0007669"/>
    <property type="project" value="Ensembl"/>
</dbReference>
<dbReference type="GO" id="GO:0007179">
    <property type="term" value="P:transforming growth factor beta receptor signaling pathway"/>
    <property type="evidence" value="ECO:0007669"/>
    <property type="project" value="Ensembl"/>
</dbReference>
<dbReference type="GO" id="GO:0003309">
    <property type="term" value="P:type B pancreatic cell differentiation"/>
    <property type="evidence" value="ECO:0007669"/>
    <property type="project" value="Ensembl"/>
</dbReference>
<dbReference type="CDD" id="cd00086">
    <property type="entry name" value="homeodomain"/>
    <property type="match status" value="1"/>
</dbReference>
<dbReference type="FunFam" id="1.10.10.60:FF:000054">
    <property type="entry name" value="One cut domain family member"/>
    <property type="match status" value="1"/>
</dbReference>
<dbReference type="FunFam" id="1.10.260.40:FF:000005">
    <property type="entry name" value="One cut domain family member"/>
    <property type="match status" value="1"/>
</dbReference>
<dbReference type="Gene3D" id="1.10.10.60">
    <property type="entry name" value="Homeodomain-like"/>
    <property type="match status" value="1"/>
</dbReference>
<dbReference type="Gene3D" id="1.10.260.40">
    <property type="entry name" value="lambda repressor-like DNA-binding domains"/>
    <property type="match status" value="1"/>
</dbReference>
<dbReference type="InterPro" id="IPR003350">
    <property type="entry name" value="CUT_dom"/>
</dbReference>
<dbReference type="InterPro" id="IPR051649">
    <property type="entry name" value="CUT_Homeobox"/>
</dbReference>
<dbReference type="InterPro" id="IPR001356">
    <property type="entry name" value="HD"/>
</dbReference>
<dbReference type="InterPro" id="IPR009057">
    <property type="entry name" value="Homeodomain-like_sf"/>
</dbReference>
<dbReference type="InterPro" id="IPR010982">
    <property type="entry name" value="Lambda_DNA-bd_dom_sf"/>
</dbReference>
<dbReference type="PANTHER" id="PTHR14057:SF9">
    <property type="entry name" value="HEPATOCYTE NUCLEAR FACTOR 6"/>
    <property type="match status" value="1"/>
</dbReference>
<dbReference type="PANTHER" id="PTHR14057">
    <property type="entry name" value="TRANSCRIPTION FACTOR ONECUT"/>
    <property type="match status" value="1"/>
</dbReference>
<dbReference type="Pfam" id="PF02376">
    <property type="entry name" value="CUT"/>
    <property type="match status" value="1"/>
</dbReference>
<dbReference type="Pfam" id="PF00046">
    <property type="entry name" value="Homeodomain"/>
    <property type="match status" value="1"/>
</dbReference>
<dbReference type="SMART" id="SM01109">
    <property type="entry name" value="CUT"/>
    <property type="match status" value="1"/>
</dbReference>
<dbReference type="SMART" id="SM00389">
    <property type="entry name" value="HOX"/>
    <property type="match status" value="1"/>
</dbReference>
<dbReference type="SUPFAM" id="SSF46689">
    <property type="entry name" value="Homeodomain-like"/>
    <property type="match status" value="1"/>
</dbReference>
<dbReference type="SUPFAM" id="SSF47413">
    <property type="entry name" value="lambda repressor-like DNA-binding domains"/>
    <property type="match status" value="1"/>
</dbReference>
<dbReference type="PROSITE" id="PS51042">
    <property type="entry name" value="CUT"/>
    <property type="match status" value="1"/>
</dbReference>
<dbReference type="PROSITE" id="PS50071">
    <property type="entry name" value="HOMEOBOX_2"/>
    <property type="match status" value="1"/>
</dbReference>
<comment type="function">
    <text>Transcriptional activator. Binds the consensus sequence 5'-DHWATTGAYTWWD-3' on a variety of gene promoters such as those of HNF3B and TTR. Important for liver genes transcription.</text>
</comment>
<comment type="subunit">
    <text evidence="1">Binds DNA as a monomer.</text>
</comment>
<comment type="subcellular location">
    <subcellularLocation>
        <location>Nucleus</location>
    </subcellularLocation>
</comment>
<comment type="tissue specificity">
    <text>Highly expressed in liver; lower expression in testis and skin.</text>
</comment>
<comment type="similarity">
    <text evidence="6">Belongs to the CUT homeobox family.</text>
</comment>
<comment type="online information" name="Wikipedia">
    <link uri="https://en.wikipedia.org/wiki/Hepatocyte_nuclear_factors"/>
    <text>Hepatocyte nuclear factors entry</text>
</comment>
<keyword id="KW-0010">Activator</keyword>
<keyword id="KW-0238">DNA-binding</keyword>
<keyword id="KW-0371">Homeobox</keyword>
<keyword id="KW-0539">Nucleus</keyword>
<keyword id="KW-1267">Proteomics identification</keyword>
<keyword id="KW-1185">Reference proteome</keyword>
<keyword id="KW-0804">Transcription</keyword>
<keyword id="KW-0805">Transcription regulation</keyword>
<protein>
    <recommendedName>
        <fullName>Hepatocyte nuclear factor 6</fullName>
        <shortName>HNF-6</shortName>
    </recommendedName>
    <alternativeName>
        <fullName>One cut domain family member 1</fullName>
    </alternativeName>
    <alternativeName>
        <fullName>One cut homeobox 1</fullName>
    </alternativeName>
</protein>
<organism>
    <name type="scientific">Homo sapiens</name>
    <name type="common">Human</name>
    <dbReference type="NCBI Taxonomy" id="9606"/>
    <lineage>
        <taxon>Eukaryota</taxon>
        <taxon>Metazoa</taxon>
        <taxon>Chordata</taxon>
        <taxon>Craniata</taxon>
        <taxon>Vertebrata</taxon>
        <taxon>Euteleostomi</taxon>
        <taxon>Mammalia</taxon>
        <taxon>Eutheria</taxon>
        <taxon>Euarchontoglires</taxon>
        <taxon>Primates</taxon>
        <taxon>Haplorrhini</taxon>
        <taxon>Catarrhini</taxon>
        <taxon>Hominidae</taxon>
        <taxon>Homo</taxon>
    </lineage>
</organism>
<gene>
    <name type="primary">ONECUT1</name>
    <name type="synonym">HNF6</name>
    <name type="synonym">HNF6A</name>
</gene>
<reference key="1">
    <citation type="submission" date="1997-11" db="EMBL/GenBank/DDBJ databases">
        <title>Isolation and characterization of the human hepatocyte nuclear factor 6 gene.</title>
        <authorList>
            <person name="Furuta H."/>
            <person name="Horikawa Y."/>
            <person name="Wang Y.-Q."/>
            <person name="Bell G.I."/>
        </authorList>
    </citation>
    <scope>NUCLEOTIDE SEQUENCE [GENOMIC DNA]</scope>
</reference>
<reference key="2">
    <citation type="submission" date="1997-04" db="EMBL/GenBank/DDBJ databases">
        <title>The sequence of human mRNA for the hepatocyte nuclear factor-6 alpha.</title>
        <authorList>
            <person name="Furuta H."/>
            <person name="Wang Y.-Q."/>
            <person name="Bell G.I."/>
        </authorList>
    </citation>
    <scope>NUCLEOTIDE SEQUENCE [MRNA]</scope>
</reference>
<reference key="3">
    <citation type="submission" date="2005-07" db="EMBL/GenBank/DDBJ databases">
        <authorList>
            <person name="Mural R.J."/>
            <person name="Istrail S."/>
            <person name="Sutton G.G."/>
            <person name="Florea L."/>
            <person name="Halpern A.L."/>
            <person name="Mobarry C.M."/>
            <person name="Lippert R."/>
            <person name="Walenz B."/>
            <person name="Shatkay H."/>
            <person name="Dew I."/>
            <person name="Miller J.R."/>
            <person name="Flanigan M.J."/>
            <person name="Edwards N.J."/>
            <person name="Bolanos R."/>
            <person name="Fasulo D."/>
            <person name="Halldorsson B.V."/>
            <person name="Hannenhalli S."/>
            <person name="Turner R."/>
            <person name="Yooseph S."/>
            <person name="Lu F."/>
            <person name="Nusskern D.R."/>
            <person name="Shue B.C."/>
            <person name="Zheng X.H."/>
            <person name="Zhong F."/>
            <person name="Delcher A.L."/>
            <person name="Huson D.H."/>
            <person name="Kravitz S.A."/>
            <person name="Mouchard L."/>
            <person name="Reinert K."/>
            <person name="Remington K.A."/>
            <person name="Clark A.G."/>
            <person name="Waterman M.S."/>
            <person name="Eichler E.E."/>
            <person name="Adams M.D."/>
            <person name="Hunkapiller M.W."/>
            <person name="Myers E.W."/>
            <person name="Venter J.C."/>
        </authorList>
    </citation>
    <scope>NUCLEOTIDE SEQUENCE [LARGE SCALE GENOMIC DNA]</scope>
</reference>
<reference key="4">
    <citation type="journal article" date="2004" name="Genome Res.">
        <title>The status, quality, and expansion of the NIH full-length cDNA project: the Mammalian Gene Collection (MGC).</title>
        <authorList>
            <consortium name="The MGC Project Team"/>
        </authorList>
    </citation>
    <scope>NUCLEOTIDE SEQUENCE [LARGE SCALE MRNA]</scope>
</reference>
<reference key="5">
    <citation type="journal article" date="1999" name="Diabetologia">
        <title>Hepatocyte nuclear factor-6: associations between genetic variability and type II diabetes and between genetic variability and estimates of insulin secretion.</title>
        <authorList>
            <person name="Moeller A.M."/>
            <person name="Ek J."/>
            <person name="Durviaux S.M."/>
            <person name="Urhammer S.A."/>
            <person name="Clausen J.O."/>
            <person name="Eiberg H."/>
            <person name="Hansen T."/>
            <person name="Rousseau G.G."/>
            <person name="Lemaigre F.P."/>
            <person name="Pedersen O."/>
        </authorList>
    </citation>
    <scope>NUCLEOTIDE SEQUENCE [GENOMIC DNA] OF 1-368</scope>
    <scope>VARIANT ALA-75</scope>
</reference>
<reference key="6">
    <citation type="submission" date="2001-11" db="EMBL/GenBank/DDBJ databases">
        <title>Yeast one-hybrid cloning of the partial human cDNA for hepatocyte nuclear factor 6.</title>
        <authorList>
            <person name="Samadani U."/>
            <person name="Costa R.H."/>
        </authorList>
    </citation>
    <scope>NUCLEOTIDE SEQUENCE [GENOMIC DNA] OF 174-465</scope>
</reference>